<feature type="chain" id="PRO_0000266445" description="Large ribosomal subunit protein uL14">
    <location>
        <begin position="1"/>
        <end position="122"/>
    </location>
</feature>
<name>RL14_ALKEH</name>
<evidence type="ECO:0000255" key="1">
    <source>
        <dbReference type="HAMAP-Rule" id="MF_01367"/>
    </source>
</evidence>
<evidence type="ECO:0000305" key="2"/>
<gene>
    <name evidence="1" type="primary">rplN</name>
    <name type="ordered locus">Mlg_0468</name>
</gene>
<reference key="1">
    <citation type="submission" date="2006-08" db="EMBL/GenBank/DDBJ databases">
        <title>Complete sequence of Alkalilimnicola ehrilichei MLHE-1.</title>
        <authorList>
            <person name="Copeland A."/>
            <person name="Lucas S."/>
            <person name="Lapidus A."/>
            <person name="Barry K."/>
            <person name="Detter J.C."/>
            <person name="Glavina del Rio T."/>
            <person name="Hammon N."/>
            <person name="Israni S."/>
            <person name="Dalin E."/>
            <person name="Tice H."/>
            <person name="Pitluck S."/>
            <person name="Sims D."/>
            <person name="Brettin T."/>
            <person name="Bruce D."/>
            <person name="Han C."/>
            <person name="Tapia R."/>
            <person name="Gilna P."/>
            <person name="Schmutz J."/>
            <person name="Larimer F."/>
            <person name="Land M."/>
            <person name="Hauser L."/>
            <person name="Kyrpides N."/>
            <person name="Mikhailova N."/>
            <person name="Oremland R.S."/>
            <person name="Hoeft S.E."/>
            <person name="Switzer-Blum J."/>
            <person name="Kulp T."/>
            <person name="King G."/>
            <person name="Tabita R."/>
            <person name="Witte B."/>
            <person name="Santini J.M."/>
            <person name="Basu P."/>
            <person name="Hollibaugh J.T."/>
            <person name="Xie G."/>
            <person name="Stolz J.F."/>
            <person name="Richardson P."/>
        </authorList>
    </citation>
    <scope>NUCLEOTIDE SEQUENCE [LARGE SCALE GENOMIC DNA]</scope>
    <source>
        <strain>ATCC BAA-1101 / DSM 17681 / MLHE-1</strain>
    </source>
</reference>
<comment type="function">
    <text evidence="1">Binds to 23S rRNA. Forms part of two intersubunit bridges in the 70S ribosome.</text>
</comment>
<comment type="subunit">
    <text evidence="1">Part of the 50S ribosomal subunit. Forms a cluster with proteins L3 and L19. In the 70S ribosome, L14 and L19 interact and together make contacts with the 16S rRNA in bridges B5 and B8.</text>
</comment>
<comment type="similarity">
    <text evidence="1">Belongs to the universal ribosomal protein uL14 family.</text>
</comment>
<accession>Q0ABG5</accession>
<protein>
    <recommendedName>
        <fullName evidence="1">Large ribosomal subunit protein uL14</fullName>
    </recommendedName>
    <alternativeName>
        <fullName evidence="2">50S ribosomal protein L14</fullName>
    </alternativeName>
</protein>
<proteinExistence type="inferred from homology"/>
<sequence length="122" mass="13429">MIQMQTTLGVADNSGARQVQCIKVLGGSRRRYAGIGDIIKVSVKDAIPRGRVKKGEVYNAVVVRTRRGVRRPDGSVIRFDGNAAVLLNNQLQPIGTRVFGPVTRELRSEKFMRIISLAPEVL</sequence>
<keyword id="KW-1185">Reference proteome</keyword>
<keyword id="KW-0687">Ribonucleoprotein</keyword>
<keyword id="KW-0689">Ribosomal protein</keyword>
<keyword id="KW-0694">RNA-binding</keyword>
<keyword id="KW-0699">rRNA-binding</keyword>
<dbReference type="EMBL" id="CP000453">
    <property type="protein sequence ID" value="ABI55822.1"/>
    <property type="molecule type" value="Genomic_DNA"/>
</dbReference>
<dbReference type="RefSeq" id="WP_011628217.1">
    <property type="nucleotide sequence ID" value="NC_008340.1"/>
</dbReference>
<dbReference type="SMR" id="Q0ABG5"/>
<dbReference type="KEGG" id="aeh:Mlg_0468"/>
<dbReference type="eggNOG" id="COG0093">
    <property type="taxonomic scope" value="Bacteria"/>
</dbReference>
<dbReference type="HOGENOM" id="CLU_095071_2_1_6"/>
<dbReference type="OrthoDB" id="9806379at2"/>
<dbReference type="Proteomes" id="UP000001962">
    <property type="component" value="Chromosome"/>
</dbReference>
<dbReference type="GO" id="GO:0022625">
    <property type="term" value="C:cytosolic large ribosomal subunit"/>
    <property type="evidence" value="ECO:0007669"/>
    <property type="project" value="TreeGrafter"/>
</dbReference>
<dbReference type="GO" id="GO:0070180">
    <property type="term" value="F:large ribosomal subunit rRNA binding"/>
    <property type="evidence" value="ECO:0007669"/>
    <property type="project" value="TreeGrafter"/>
</dbReference>
<dbReference type="GO" id="GO:0003735">
    <property type="term" value="F:structural constituent of ribosome"/>
    <property type="evidence" value="ECO:0007669"/>
    <property type="project" value="InterPro"/>
</dbReference>
<dbReference type="GO" id="GO:0006412">
    <property type="term" value="P:translation"/>
    <property type="evidence" value="ECO:0007669"/>
    <property type="project" value="UniProtKB-UniRule"/>
</dbReference>
<dbReference type="CDD" id="cd00337">
    <property type="entry name" value="Ribosomal_uL14"/>
    <property type="match status" value="1"/>
</dbReference>
<dbReference type="FunFam" id="2.40.150.20:FF:000001">
    <property type="entry name" value="50S ribosomal protein L14"/>
    <property type="match status" value="1"/>
</dbReference>
<dbReference type="Gene3D" id="2.40.150.20">
    <property type="entry name" value="Ribosomal protein L14"/>
    <property type="match status" value="1"/>
</dbReference>
<dbReference type="HAMAP" id="MF_01367">
    <property type="entry name" value="Ribosomal_uL14"/>
    <property type="match status" value="1"/>
</dbReference>
<dbReference type="InterPro" id="IPR000218">
    <property type="entry name" value="Ribosomal_uL14"/>
</dbReference>
<dbReference type="InterPro" id="IPR005745">
    <property type="entry name" value="Ribosomal_uL14_bac-type"/>
</dbReference>
<dbReference type="InterPro" id="IPR019972">
    <property type="entry name" value="Ribosomal_uL14_CS"/>
</dbReference>
<dbReference type="InterPro" id="IPR036853">
    <property type="entry name" value="Ribosomal_uL14_sf"/>
</dbReference>
<dbReference type="NCBIfam" id="TIGR01067">
    <property type="entry name" value="rplN_bact"/>
    <property type="match status" value="1"/>
</dbReference>
<dbReference type="PANTHER" id="PTHR11761">
    <property type="entry name" value="50S/60S RIBOSOMAL PROTEIN L14/L23"/>
    <property type="match status" value="1"/>
</dbReference>
<dbReference type="PANTHER" id="PTHR11761:SF3">
    <property type="entry name" value="LARGE RIBOSOMAL SUBUNIT PROTEIN UL14M"/>
    <property type="match status" value="1"/>
</dbReference>
<dbReference type="Pfam" id="PF00238">
    <property type="entry name" value="Ribosomal_L14"/>
    <property type="match status" value="1"/>
</dbReference>
<dbReference type="SMART" id="SM01374">
    <property type="entry name" value="Ribosomal_L14"/>
    <property type="match status" value="1"/>
</dbReference>
<dbReference type="SUPFAM" id="SSF50193">
    <property type="entry name" value="Ribosomal protein L14"/>
    <property type="match status" value="1"/>
</dbReference>
<dbReference type="PROSITE" id="PS00049">
    <property type="entry name" value="RIBOSOMAL_L14"/>
    <property type="match status" value="1"/>
</dbReference>
<organism>
    <name type="scientific">Alkalilimnicola ehrlichii (strain ATCC BAA-1101 / DSM 17681 / MLHE-1)</name>
    <dbReference type="NCBI Taxonomy" id="187272"/>
    <lineage>
        <taxon>Bacteria</taxon>
        <taxon>Pseudomonadati</taxon>
        <taxon>Pseudomonadota</taxon>
        <taxon>Gammaproteobacteria</taxon>
        <taxon>Chromatiales</taxon>
        <taxon>Ectothiorhodospiraceae</taxon>
        <taxon>Alkalilimnicola</taxon>
    </lineage>
</organism>